<accession>A4W3M3</accession>
<reference key="1">
    <citation type="journal article" date="2007" name="PLoS ONE">
        <title>A glimpse of streptococcal toxic shock syndrome from comparative genomics of S. suis 2 Chinese isolates.</title>
        <authorList>
            <person name="Chen C."/>
            <person name="Tang J."/>
            <person name="Dong W."/>
            <person name="Wang C."/>
            <person name="Feng Y."/>
            <person name="Wang J."/>
            <person name="Zheng F."/>
            <person name="Pan X."/>
            <person name="Liu D."/>
            <person name="Li M."/>
            <person name="Song Y."/>
            <person name="Zhu X."/>
            <person name="Sun H."/>
            <person name="Feng T."/>
            <person name="Guo Z."/>
            <person name="Ju A."/>
            <person name="Ge J."/>
            <person name="Dong Y."/>
            <person name="Sun W."/>
            <person name="Jiang Y."/>
            <person name="Wang J."/>
            <person name="Yan J."/>
            <person name="Yang H."/>
            <person name="Wang X."/>
            <person name="Gao G.F."/>
            <person name="Yang R."/>
            <person name="Wang J."/>
            <person name="Yu J."/>
        </authorList>
    </citation>
    <scope>NUCLEOTIDE SEQUENCE [LARGE SCALE GENOMIC DNA]</scope>
    <source>
        <strain>98HAH33</strain>
    </source>
</reference>
<keyword id="KW-0963">Cytoplasm</keyword>
<keyword id="KW-0441">Lipid A biosynthesis</keyword>
<keyword id="KW-0444">Lipid biosynthesis</keyword>
<keyword id="KW-0443">Lipid metabolism</keyword>
<keyword id="KW-0456">Lyase</keyword>
<sequence length="140" mass="15415">MIDILKIKEALPHLYPMLLVDRVLEVSEDEIVALKNVTINEPFFNGHFPDYPVMPGVLIMEALAQTAGVLELSKEENKGKLVFYAGMDKVKFKKQVVPGDQLIMTAKFVKRRGTIAVVEAKAEVEGKLAASGTLTFAIGK</sequence>
<organism>
    <name type="scientific">Streptococcus suis (strain 98HAH33)</name>
    <dbReference type="NCBI Taxonomy" id="391296"/>
    <lineage>
        <taxon>Bacteria</taxon>
        <taxon>Bacillati</taxon>
        <taxon>Bacillota</taxon>
        <taxon>Bacilli</taxon>
        <taxon>Lactobacillales</taxon>
        <taxon>Streptococcaceae</taxon>
        <taxon>Streptococcus</taxon>
    </lineage>
</organism>
<name>FABZ_STRS2</name>
<evidence type="ECO:0000255" key="1">
    <source>
        <dbReference type="HAMAP-Rule" id="MF_00406"/>
    </source>
</evidence>
<dbReference type="EC" id="4.2.1.59" evidence="1"/>
<dbReference type="EMBL" id="CP000408">
    <property type="protein sequence ID" value="ABP92962.1"/>
    <property type="molecule type" value="Genomic_DNA"/>
</dbReference>
<dbReference type="SMR" id="A4W3M3"/>
<dbReference type="KEGG" id="ssv:SSU98_1804"/>
<dbReference type="HOGENOM" id="CLU_078912_1_2_9"/>
<dbReference type="GO" id="GO:0005737">
    <property type="term" value="C:cytoplasm"/>
    <property type="evidence" value="ECO:0007669"/>
    <property type="project" value="UniProtKB-SubCell"/>
</dbReference>
<dbReference type="GO" id="GO:0016020">
    <property type="term" value="C:membrane"/>
    <property type="evidence" value="ECO:0007669"/>
    <property type="project" value="GOC"/>
</dbReference>
<dbReference type="GO" id="GO:0019171">
    <property type="term" value="F:(3R)-hydroxyacyl-[acyl-carrier-protein] dehydratase activity"/>
    <property type="evidence" value="ECO:0007669"/>
    <property type="project" value="UniProtKB-EC"/>
</dbReference>
<dbReference type="GO" id="GO:0006633">
    <property type="term" value="P:fatty acid biosynthetic process"/>
    <property type="evidence" value="ECO:0007669"/>
    <property type="project" value="UniProtKB-UniRule"/>
</dbReference>
<dbReference type="GO" id="GO:0009245">
    <property type="term" value="P:lipid A biosynthetic process"/>
    <property type="evidence" value="ECO:0007669"/>
    <property type="project" value="UniProtKB-UniRule"/>
</dbReference>
<dbReference type="CDD" id="cd01288">
    <property type="entry name" value="FabZ"/>
    <property type="match status" value="1"/>
</dbReference>
<dbReference type="FunFam" id="3.10.129.10:FF:000001">
    <property type="entry name" value="3-hydroxyacyl-[acyl-carrier-protein] dehydratase FabZ"/>
    <property type="match status" value="1"/>
</dbReference>
<dbReference type="Gene3D" id="3.10.129.10">
    <property type="entry name" value="Hotdog Thioesterase"/>
    <property type="match status" value="1"/>
</dbReference>
<dbReference type="HAMAP" id="MF_00406">
    <property type="entry name" value="FabZ"/>
    <property type="match status" value="1"/>
</dbReference>
<dbReference type="InterPro" id="IPR013114">
    <property type="entry name" value="FabA_FabZ"/>
</dbReference>
<dbReference type="InterPro" id="IPR010084">
    <property type="entry name" value="FabZ"/>
</dbReference>
<dbReference type="InterPro" id="IPR029069">
    <property type="entry name" value="HotDog_dom_sf"/>
</dbReference>
<dbReference type="NCBIfam" id="TIGR01750">
    <property type="entry name" value="fabZ"/>
    <property type="match status" value="1"/>
</dbReference>
<dbReference type="NCBIfam" id="NF000582">
    <property type="entry name" value="PRK00006.1"/>
    <property type="match status" value="1"/>
</dbReference>
<dbReference type="PANTHER" id="PTHR30272">
    <property type="entry name" value="3-HYDROXYACYL-[ACYL-CARRIER-PROTEIN] DEHYDRATASE"/>
    <property type="match status" value="1"/>
</dbReference>
<dbReference type="PANTHER" id="PTHR30272:SF1">
    <property type="entry name" value="3-HYDROXYACYL-[ACYL-CARRIER-PROTEIN] DEHYDRATASE"/>
    <property type="match status" value="1"/>
</dbReference>
<dbReference type="Pfam" id="PF07977">
    <property type="entry name" value="FabA"/>
    <property type="match status" value="1"/>
</dbReference>
<dbReference type="SUPFAM" id="SSF54637">
    <property type="entry name" value="Thioesterase/thiol ester dehydrase-isomerase"/>
    <property type="match status" value="1"/>
</dbReference>
<comment type="function">
    <text evidence="1">Involved in unsaturated fatty acids biosynthesis. Catalyzes the dehydration of short chain beta-hydroxyacyl-ACPs and long chain saturated and unsaturated beta-hydroxyacyl-ACPs.</text>
</comment>
<comment type="catalytic activity">
    <reaction evidence="1">
        <text>a (3R)-hydroxyacyl-[ACP] = a (2E)-enoyl-[ACP] + H2O</text>
        <dbReference type="Rhea" id="RHEA:13097"/>
        <dbReference type="Rhea" id="RHEA-COMP:9925"/>
        <dbReference type="Rhea" id="RHEA-COMP:9945"/>
        <dbReference type="ChEBI" id="CHEBI:15377"/>
        <dbReference type="ChEBI" id="CHEBI:78784"/>
        <dbReference type="ChEBI" id="CHEBI:78827"/>
        <dbReference type="EC" id="4.2.1.59"/>
    </reaction>
</comment>
<comment type="subcellular location">
    <subcellularLocation>
        <location evidence="1">Cytoplasm</location>
    </subcellularLocation>
</comment>
<comment type="similarity">
    <text evidence="1">Belongs to the thioester dehydratase family. FabZ subfamily.</text>
</comment>
<gene>
    <name evidence="1" type="primary">fabZ</name>
    <name type="ordered locus">SSU98_1804</name>
</gene>
<proteinExistence type="inferred from homology"/>
<feature type="chain" id="PRO_0000301935" description="3-hydroxyacyl-[acyl-carrier-protein] dehydratase FabZ">
    <location>
        <begin position="1"/>
        <end position="140"/>
    </location>
</feature>
<feature type="active site" evidence="1">
    <location>
        <position position="47"/>
    </location>
</feature>
<protein>
    <recommendedName>
        <fullName evidence="1">3-hydroxyacyl-[acyl-carrier-protein] dehydratase FabZ</fullName>
        <ecNumber evidence="1">4.2.1.59</ecNumber>
    </recommendedName>
    <alternativeName>
        <fullName evidence="1">(3R)-hydroxymyristoyl-[acyl-carrier-protein] dehydratase</fullName>
        <shortName evidence="1">(3R)-hydroxymyristoyl-ACP dehydrase</shortName>
    </alternativeName>
    <alternativeName>
        <fullName evidence="1">Beta-hydroxyacyl-ACP dehydratase</fullName>
    </alternativeName>
</protein>